<name>RRF_PSEF5</name>
<dbReference type="EMBL" id="CP000076">
    <property type="protein sequence ID" value="AAY90466.1"/>
    <property type="molecule type" value="Genomic_DNA"/>
</dbReference>
<dbReference type="RefSeq" id="WP_011059527.1">
    <property type="nucleotide sequence ID" value="NC_004129.6"/>
</dbReference>
<dbReference type="SMR" id="Q4KHH3"/>
<dbReference type="STRING" id="220664.PFL_1179"/>
<dbReference type="GeneID" id="57474183"/>
<dbReference type="KEGG" id="pfl:PFL_1179"/>
<dbReference type="eggNOG" id="COG0233">
    <property type="taxonomic scope" value="Bacteria"/>
</dbReference>
<dbReference type="HOGENOM" id="CLU_073981_2_1_6"/>
<dbReference type="Proteomes" id="UP000008540">
    <property type="component" value="Chromosome"/>
</dbReference>
<dbReference type="GO" id="GO:0005829">
    <property type="term" value="C:cytosol"/>
    <property type="evidence" value="ECO:0007669"/>
    <property type="project" value="GOC"/>
</dbReference>
<dbReference type="GO" id="GO:0043023">
    <property type="term" value="F:ribosomal large subunit binding"/>
    <property type="evidence" value="ECO:0007669"/>
    <property type="project" value="TreeGrafter"/>
</dbReference>
<dbReference type="GO" id="GO:0002184">
    <property type="term" value="P:cytoplasmic translational termination"/>
    <property type="evidence" value="ECO:0007669"/>
    <property type="project" value="TreeGrafter"/>
</dbReference>
<dbReference type="CDD" id="cd00520">
    <property type="entry name" value="RRF"/>
    <property type="match status" value="1"/>
</dbReference>
<dbReference type="FunFam" id="1.10.132.20:FF:000001">
    <property type="entry name" value="Ribosome-recycling factor"/>
    <property type="match status" value="1"/>
</dbReference>
<dbReference type="FunFam" id="3.30.1360.40:FF:000001">
    <property type="entry name" value="Ribosome-recycling factor"/>
    <property type="match status" value="1"/>
</dbReference>
<dbReference type="Gene3D" id="3.30.1360.40">
    <property type="match status" value="1"/>
</dbReference>
<dbReference type="Gene3D" id="1.10.132.20">
    <property type="entry name" value="Ribosome-recycling factor"/>
    <property type="match status" value="1"/>
</dbReference>
<dbReference type="HAMAP" id="MF_00040">
    <property type="entry name" value="RRF"/>
    <property type="match status" value="1"/>
</dbReference>
<dbReference type="InterPro" id="IPR002661">
    <property type="entry name" value="Ribosome_recyc_fac"/>
</dbReference>
<dbReference type="InterPro" id="IPR023584">
    <property type="entry name" value="Ribosome_recyc_fac_dom"/>
</dbReference>
<dbReference type="InterPro" id="IPR036191">
    <property type="entry name" value="RRF_sf"/>
</dbReference>
<dbReference type="NCBIfam" id="TIGR00496">
    <property type="entry name" value="frr"/>
    <property type="match status" value="1"/>
</dbReference>
<dbReference type="PANTHER" id="PTHR20982:SF3">
    <property type="entry name" value="MITOCHONDRIAL RIBOSOME RECYCLING FACTOR PSEUDO 1"/>
    <property type="match status" value="1"/>
</dbReference>
<dbReference type="PANTHER" id="PTHR20982">
    <property type="entry name" value="RIBOSOME RECYCLING FACTOR"/>
    <property type="match status" value="1"/>
</dbReference>
<dbReference type="Pfam" id="PF01765">
    <property type="entry name" value="RRF"/>
    <property type="match status" value="1"/>
</dbReference>
<dbReference type="SUPFAM" id="SSF55194">
    <property type="entry name" value="Ribosome recycling factor, RRF"/>
    <property type="match status" value="1"/>
</dbReference>
<protein>
    <recommendedName>
        <fullName evidence="1">Ribosome-recycling factor</fullName>
        <shortName evidence="1">RRF</shortName>
    </recommendedName>
    <alternativeName>
        <fullName evidence="1">Ribosome-releasing factor</fullName>
    </alternativeName>
</protein>
<evidence type="ECO:0000255" key="1">
    <source>
        <dbReference type="HAMAP-Rule" id="MF_00040"/>
    </source>
</evidence>
<reference key="1">
    <citation type="journal article" date="2005" name="Nat. Biotechnol.">
        <title>Complete genome sequence of the plant commensal Pseudomonas fluorescens Pf-5.</title>
        <authorList>
            <person name="Paulsen I.T."/>
            <person name="Press C.M."/>
            <person name="Ravel J."/>
            <person name="Kobayashi D.Y."/>
            <person name="Myers G.S.A."/>
            <person name="Mavrodi D.V."/>
            <person name="DeBoy R.T."/>
            <person name="Seshadri R."/>
            <person name="Ren Q."/>
            <person name="Madupu R."/>
            <person name="Dodson R.J."/>
            <person name="Durkin A.S."/>
            <person name="Brinkac L.M."/>
            <person name="Daugherty S.C."/>
            <person name="Sullivan S.A."/>
            <person name="Rosovitz M.J."/>
            <person name="Gwinn M.L."/>
            <person name="Zhou L."/>
            <person name="Schneider D.J."/>
            <person name="Cartinhour S.W."/>
            <person name="Nelson W.C."/>
            <person name="Weidman J."/>
            <person name="Watkins K."/>
            <person name="Tran K."/>
            <person name="Khouri H."/>
            <person name="Pierson E.A."/>
            <person name="Pierson L.S. III"/>
            <person name="Thomashow L.S."/>
            <person name="Loper J.E."/>
        </authorList>
    </citation>
    <scope>NUCLEOTIDE SEQUENCE [LARGE SCALE GENOMIC DNA]</scope>
    <source>
        <strain>ATCC BAA-477 / NRRL B-23932 / Pf-5</strain>
    </source>
</reference>
<accession>Q4KHH3</accession>
<keyword id="KW-0963">Cytoplasm</keyword>
<keyword id="KW-0648">Protein biosynthesis</keyword>
<sequence>MINEIKKDAQERMKKSLESLAHAFGQIRTGKAHPSILGSVMVPYYGTDTPLSGVANVTVKDSQTLQVVPFERNMLGAIDKAIGSAGLNLNPTNLGELLLIKMAPLTEETRKGFTKQARAAAEDARVAVRNIRRDALGELKKLTKDKEISEDEERRGSAEIDKLIKDFEAQIAKATEEKEKDLMAV</sequence>
<proteinExistence type="inferred from homology"/>
<feature type="chain" id="PRO_0000167519" description="Ribosome-recycling factor">
    <location>
        <begin position="1"/>
        <end position="185"/>
    </location>
</feature>
<organism>
    <name type="scientific">Pseudomonas fluorescens (strain ATCC BAA-477 / NRRL B-23932 / Pf-5)</name>
    <dbReference type="NCBI Taxonomy" id="220664"/>
    <lineage>
        <taxon>Bacteria</taxon>
        <taxon>Pseudomonadati</taxon>
        <taxon>Pseudomonadota</taxon>
        <taxon>Gammaproteobacteria</taxon>
        <taxon>Pseudomonadales</taxon>
        <taxon>Pseudomonadaceae</taxon>
        <taxon>Pseudomonas</taxon>
    </lineage>
</organism>
<comment type="function">
    <text evidence="1">Responsible for the release of ribosomes from messenger RNA at the termination of protein biosynthesis. May increase the efficiency of translation by recycling ribosomes from one round of translation to another.</text>
</comment>
<comment type="subcellular location">
    <subcellularLocation>
        <location evidence="1">Cytoplasm</location>
    </subcellularLocation>
</comment>
<comment type="similarity">
    <text evidence="1">Belongs to the RRF family.</text>
</comment>
<gene>
    <name evidence="1" type="primary">frr</name>
    <name type="ordered locus">PFL_1179</name>
</gene>